<accession>Q2S6N0</accession>
<dbReference type="EC" id="2.1.1.170" evidence="1"/>
<dbReference type="EMBL" id="CP000155">
    <property type="protein sequence ID" value="ABC33694.1"/>
    <property type="molecule type" value="Genomic_DNA"/>
</dbReference>
<dbReference type="RefSeq" id="WP_011400744.1">
    <property type="nucleotide sequence ID" value="NC_007645.1"/>
</dbReference>
<dbReference type="SMR" id="Q2S6N0"/>
<dbReference type="STRING" id="349521.HCH_07082"/>
<dbReference type="KEGG" id="hch:HCH_07082"/>
<dbReference type="eggNOG" id="COG0357">
    <property type="taxonomic scope" value="Bacteria"/>
</dbReference>
<dbReference type="HOGENOM" id="CLU_065341_2_0_6"/>
<dbReference type="OrthoDB" id="9808773at2"/>
<dbReference type="Proteomes" id="UP000000238">
    <property type="component" value="Chromosome"/>
</dbReference>
<dbReference type="GO" id="GO:0005829">
    <property type="term" value="C:cytosol"/>
    <property type="evidence" value="ECO:0007669"/>
    <property type="project" value="TreeGrafter"/>
</dbReference>
<dbReference type="GO" id="GO:0070043">
    <property type="term" value="F:rRNA (guanine-N7-)-methyltransferase activity"/>
    <property type="evidence" value="ECO:0007669"/>
    <property type="project" value="UniProtKB-UniRule"/>
</dbReference>
<dbReference type="Gene3D" id="3.40.50.150">
    <property type="entry name" value="Vaccinia Virus protein VP39"/>
    <property type="match status" value="1"/>
</dbReference>
<dbReference type="HAMAP" id="MF_00074">
    <property type="entry name" value="16SrRNA_methyltr_G"/>
    <property type="match status" value="1"/>
</dbReference>
<dbReference type="InterPro" id="IPR003682">
    <property type="entry name" value="rRNA_ssu_MeTfrase_G"/>
</dbReference>
<dbReference type="InterPro" id="IPR029063">
    <property type="entry name" value="SAM-dependent_MTases_sf"/>
</dbReference>
<dbReference type="NCBIfam" id="TIGR00138">
    <property type="entry name" value="rsmG_gidB"/>
    <property type="match status" value="1"/>
</dbReference>
<dbReference type="PANTHER" id="PTHR31760">
    <property type="entry name" value="S-ADENOSYL-L-METHIONINE-DEPENDENT METHYLTRANSFERASES SUPERFAMILY PROTEIN"/>
    <property type="match status" value="1"/>
</dbReference>
<dbReference type="PANTHER" id="PTHR31760:SF0">
    <property type="entry name" value="S-ADENOSYL-L-METHIONINE-DEPENDENT METHYLTRANSFERASES SUPERFAMILY PROTEIN"/>
    <property type="match status" value="1"/>
</dbReference>
<dbReference type="Pfam" id="PF02527">
    <property type="entry name" value="GidB"/>
    <property type="match status" value="1"/>
</dbReference>
<dbReference type="PIRSF" id="PIRSF003078">
    <property type="entry name" value="GidB"/>
    <property type="match status" value="1"/>
</dbReference>
<dbReference type="SUPFAM" id="SSF53335">
    <property type="entry name" value="S-adenosyl-L-methionine-dependent methyltransferases"/>
    <property type="match status" value="1"/>
</dbReference>
<reference key="1">
    <citation type="journal article" date="2005" name="Nucleic Acids Res.">
        <title>Genomic blueprint of Hahella chejuensis, a marine microbe producing an algicidal agent.</title>
        <authorList>
            <person name="Jeong H."/>
            <person name="Yim J.H."/>
            <person name="Lee C."/>
            <person name="Choi S.-H."/>
            <person name="Park Y.K."/>
            <person name="Yoon S.H."/>
            <person name="Hur C.-G."/>
            <person name="Kang H.-Y."/>
            <person name="Kim D."/>
            <person name="Lee H.H."/>
            <person name="Park K.H."/>
            <person name="Park S.-H."/>
            <person name="Park H.-S."/>
            <person name="Lee H.K."/>
            <person name="Oh T.K."/>
            <person name="Kim J.F."/>
        </authorList>
    </citation>
    <scope>NUCLEOTIDE SEQUENCE [LARGE SCALE GENOMIC DNA]</scope>
    <source>
        <strain>KCTC 2396</strain>
    </source>
</reference>
<proteinExistence type="inferred from homology"/>
<gene>
    <name evidence="1" type="primary">rsmG</name>
    <name type="ordered locus">HCH_07082</name>
</gene>
<protein>
    <recommendedName>
        <fullName evidence="1">Ribosomal RNA small subunit methyltransferase G</fullName>
        <ecNumber evidence="1">2.1.1.170</ecNumber>
    </recommendedName>
    <alternativeName>
        <fullName evidence="1">16S rRNA 7-methylguanosine methyltransferase</fullName>
        <shortName evidence="1">16S rRNA m7G methyltransferase</shortName>
    </alternativeName>
</protein>
<keyword id="KW-0963">Cytoplasm</keyword>
<keyword id="KW-0489">Methyltransferase</keyword>
<keyword id="KW-1185">Reference proteome</keyword>
<keyword id="KW-0698">rRNA processing</keyword>
<keyword id="KW-0949">S-adenosyl-L-methionine</keyword>
<keyword id="KW-0808">Transferase</keyword>
<name>RSMG_HAHCH</name>
<feature type="chain" id="PRO_0000335360" description="Ribosomal RNA small subunit methyltransferase G">
    <location>
        <begin position="1"/>
        <end position="217"/>
    </location>
</feature>
<feature type="binding site" evidence="1">
    <location>
        <position position="79"/>
    </location>
    <ligand>
        <name>S-adenosyl-L-methionine</name>
        <dbReference type="ChEBI" id="CHEBI:59789"/>
    </ligand>
</feature>
<feature type="binding site" evidence="1">
    <location>
        <position position="84"/>
    </location>
    <ligand>
        <name>S-adenosyl-L-methionine</name>
        <dbReference type="ChEBI" id="CHEBI:59789"/>
    </ligand>
</feature>
<feature type="binding site" evidence="1">
    <location>
        <begin position="130"/>
        <end position="131"/>
    </location>
    <ligand>
        <name>S-adenosyl-L-methionine</name>
        <dbReference type="ChEBI" id="CHEBI:59789"/>
    </ligand>
</feature>
<feature type="binding site" evidence="1">
    <location>
        <position position="145"/>
    </location>
    <ligand>
        <name>S-adenosyl-L-methionine</name>
        <dbReference type="ChEBI" id="CHEBI:59789"/>
    </ligand>
</feature>
<comment type="function">
    <text evidence="1">Specifically methylates the N7 position of guanine in position 527 of 16S rRNA.</text>
</comment>
<comment type="catalytic activity">
    <reaction evidence="1">
        <text>guanosine(527) in 16S rRNA + S-adenosyl-L-methionine = N(7)-methylguanosine(527) in 16S rRNA + S-adenosyl-L-homocysteine</text>
        <dbReference type="Rhea" id="RHEA:42732"/>
        <dbReference type="Rhea" id="RHEA-COMP:10209"/>
        <dbReference type="Rhea" id="RHEA-COMP:10210"/>
        <dbReference type="ChEBI" id="CHEBI:57856"/>
        <dbReference type="ChEBI" id="CHEBI:59789"/>
        <dbReference type="ChEBI" id="CHEBI:74269"/>
        <dbReference type="ChEBI" id="CHEBI:74480"/>
        <dbReference type="EC" id="2.1.1.170"/>
    </reaction>
</comment>
<comment type="subcellular location">
    <subcellularLocation>
        <location evidence="1">Cytoplasm</location>
    </subcellularLocation>
</comment>
<comment type="similarity">
    <text evidence="1">Belongs to the methyltransferase superfamily. RNA methyltransferase RsmG family.</text>
</comment>
<evidence type="ECO:0000255" key="1">
    <source>
        <dbReference type="HAMAP-Rule" id="MF_00074"/>
    </source>
</evidence>
<organism>
    <name type="scientific">Hahella chejuensis (strain KCTC 2396)</name>
    <dbReference type="NCBI Taxonomy" id="349521"/>
    <lineage>
        <taxon>Bacteria</taxon>
        <taxon>Pseudomonadati</taxon>
        <taxon>Pseudomonadota</taxon>
        <taxon>Gammaproteobacteria</taxon>
        <taxon>Oceanospirillales</taxon>
        <taxon>Hahellaceae</taxon>
        <taxon>Hahella</taxon>
    </lineage>
</organism>
<sequence length="217" mass="24027">MTLVLNQTEQLTSGLKAMGVKLAEVQQAKILRYLELLHKWNKAYNLTAVRDPVLHVSRHILDSLAALPYLKGVQFLDVGAGAGLPGIPLSIALPESHWTLLDSNGKKTRFMDQCRMDMGLPNLRVEHTRIEAFSPDVKFDGIISRAFATIGDMIAGCRDLILSETRIYALKGLYPHDEIEAMPADFEVVEWHKLEVPGCDGERHLLIIARSGNTGGS</sequence>